<organism>
    <name type="scientific">Vaccinia virus (strain Western Reserve)</name>
    <name type="common">VACV</name>
    <name type="synonym">Vaccinia virus (strain WR)</name>
    <dbReference type="NCBI Taxonomy" id="10254"/>
    <lineage>
        <taxon>Viruses</taxon>
        <taxon>Varidnaviria</taxon>
        <taxon>Bamfordvirae</taxon>
        <taxon>Nucleocytoviricota</taxon>
        <taxon>Pokkesviricetes</taxon>
        <taxon>Chitovirales</taxon>
        <taxon>Poxviridae</taxon>
        <taxon>Chordopoxvirinae</taxon>
        <taxon>Orthopoxvirus</taxon>
        <taxon>Vaccinia virus</taxon>
    </lineage>
</organism>
<comment type="similarity">
    <text evidence="1">Belongs to the poxviridae A56.5 protein family.</text>
</comment>
<evidence type="ECO:0000305" key="1"/>
<name>A565_VACCW</name>
<sequence length="37" mass="4046">MSGIVKSIILSGPSGLGKTAIAKRLWEYIWICGVPYH</sequence>
<proteinExistence type="inferred from homology"/>
<organismHost>
    <name type="scientific">Bos taurus</name>
    <name type="common">Bovine</name>
    <dbReference type="NCBI Taxonomy" id="9913"/>
</organismHost>
<dbReference type="EMBL" id="D11079">
    <property type="status" value="NOT_ANNOTATED_CDS"/>
    <property type="molecule type" value="Genomic_DNA"/>
</dbReference>
<dbReference type="EMBL" id="M93956">
    <property type="status" value="NOT_ANNOTATED_CDS"/>
    <property type="molecule type" value="Genomic_DNA"/>
</dbReference>
<dbReference type="EMBL" id="AY243312">
    <property type="status" value="NOT_ANNOTATED_CDS"/>
    <property type="molecule type" value="Genomic_DNA"/>
</dbReference>
<dbReference type="Proteomes" id="UP000000344">
    <property type="component" value="Genome"/>
</dbReference>
<dbReference type="InterPro" id="IPR027417">
    <property type="entry name" value="P-loop_NTPase"/>
</dbReference>
<dbReference type="SUPFAM" id="SSF52540">
    <property type="entry name" value="P-loop containing nucleoside triphosphate hydrolases"/>
    <property type="match status" value="1"/>
</dbReference>
<reference key="1">
    <citation type="journal article" date="1996" name="Gene">
        <title>Characterization of the vaccinia MVA hemagglutinin gene locus and its evaluation as an insertion site for foreign genes.</title>
        <authorList>
            <person name="Antoine G."/>
            <person name="Scheiflinger F."/>
            <person name="Holzer G."/>
            <person name="Langmann T."/>
            <person name="Falkner F.G."/>
            <person name="Dorner F."/>
        </authorList>
    </citation>
    <scope>NUCLEOTIDE SEQUENCE [GENOMIC DNA]</scope>
</reference>
<reference key="2">
    <citation type="journal article" date="1998" name="Virology">
        <title>The complete genomic sequence of the modified vaccinia Ankara strain: comparison with other orthopoxviruses.</title>
        <authorList>
            <person name="Antoine G."/>
            <person name="Scheiflinger F."/>
            <person name="Dorner F."/>
            <person name="Falkner F.G."/>
        </authorList>
    </citation>
    <scope>NUCLEOTIDE SEQUENCE [LARGE SCALE GENOMIC DNA]</scope>
</reference>
<reference key="3">
    <citation type="submission" date="2004-04" db="EMBL/GenBank/DDBJ databases">
        <authorList>
            <person name="Esposito J.J."/>
            <person name="Frace M."/>
            <person name="Sammons S.A."/>
            <person name="Olsen-Rasmussen M.S."/>
            <person name="Osborne J."/>
            <person name="Khristova M."/>
            <person name="Wohlhueter R.M."/>
        </authorList>
    </citation>
    <scope>NUCLEOTIDE SEQUENCE [LARGE SCALE GENOMIC DNA]</scope>
    <source>
        <strain>Isolate Acambis 3000</strain>
    </source>
</reference>
<keyword id="KW-1185">Reference proteome</keyword>
<feature type="chain" id="PRO_0000412177" description="Uncharacterized protein A56.5">
    <location>
        <begin position="1"/>
        <end position="37"/>
    </location>
</feature>
<accession>P0CK24</accession>
<protein>
    <recommendedName>
        <fullName>Uncharacterized protein A56.5</fullName>
    </recommendedName>
</protein>
<gene>
    <name type="primary">HA</name>
    <name type="ordered locus">VACWR181.5</name>
</gene>